<protein>
    <recommendedName>
        <fullName evidence="1">Ion-translocating oxidoreductase complex subunit B</fullName>
        <ecNumber evidence="1">7.-.-.-</ecNumber>
    </recommendedName>
    <alternativeName>
        <fullName evidence="1">Rnf electron transport complex subunit B</fullName>
    </alternativeName>
</protein>
<organism>
    <name type="scientific">Pectobacterium carotovorum subsp. carotovorum (strain PC1)</name>
    <dbReference type="NCBI Taxonomy" id="561230"/>
    <lineage>
        <taxon>Bacteria</taxon>
        <taxon>Pseudomonadati</taxon>
        <taxon>Pseudomonadota</taxon>
        <taxon>Gammaproteobacteria</taxon>
        <taxon>Enterobacterales</taxon>
        <taxon>Pectobacteriaceae</taxon>
        <taxon>Pectobacterium</taxon>
    </lineage>
</organism>
<reference key="1">
    <citation type="submission" date="2009-07" db="EMBL/GenBank/DDBJ databases">
        <title>Complete sequence of Pectobacterium carotovorum subsp. carotovorum PC1.</title>
        <authorList>
            <consortium name="US DOE Joint Genome Institute"/>
            <person name="Lucas S."/>
            <person name="Copeland A."/>
            <person name="Lapidus A."/>
            <person name="Glavina del Rio T."/>
            <person name="Tice H."/>
            <person name="Bruce D."/>
            <person name="Goodwin L."/>
            <person name="Pitluck S."/>
            <person name="Munk A.C."/>
            <person name="Brettin T."/>
            <person name="Detter J.C."/>
            <person name="Han C."/>
            <person name="Tapia R."/>
            <person name="Larimer F."/>
            <person name="Land M."/>
            <person name="Hauser L."/>
            <person name="Kyrpides N."/>
            <person name="Mikhailova N."/>
            <person name="Balakrishnan V."/>
            <person name="Glasner J."/>
            <person name="Perna N.T."/>
        </authorList>
    </citation>
    <scope>NUCLEOTIDE SEQUENCE [LARGE SCALE GENOMIC DNA]</scope>
    <source>
        <strain>PC1</strain>
    </source>
</reference>
<feature type="chain" id="PRO_1000206300" description="Ion-translocating oxidoreductase complex subunit B">
    <location>
        <begin position="1"/>
        <end position="192"/>
    </location>
</feature>
<feature type="domain" description="4Fe-4S" evidence="1">
    <location>
        <begin position="32"/>
        <end position="91"/>
    </location>
</feature>
<feature type="domain" description="4Fe-4S ferredoxin-type 1" evidence="1">
    <location>
        <begin position="108"/>
        <end position="137"/>
    </location>
</feature>
<feature type="domain" description="4Fe-4S ferredoxin-type 2" evidence="1">
    <location>
        <begin position="138"/>
        <end position="167"/>
    </location>
</feature>
<feature type="region of interest" description="Hydrophobic" evidence="1">
    <location>
        <begin position="1"/>
        <end position="26"/>
    </location>
</feature>
<feature type="binding site" evidence="1">
    <location>
        <position position="49"/>
    </location>
    <ligand>
        <name>[4Fe-4S] cluster</name>
        <dbReference type="ChEBI" id="CHEBI:49883"/>
        <label>1</label>
    </ligand>
</feature>
<feature type="binding site" evidence="1">
    <location>
        <position position="52"/>
    </location>
    <ligand>
        <name>[4Fe-4S] cluster</name>
        <dbReference type="ChEBI" id="CHEBI:49883"/>
        <label>1</label>
    </ligand>
</feature>
<feature type="binding site" evidence="1">
    <location>
        <position position="57"/>
    </location>
    <ligand>
        <name>[4Fe-4S] cluster</name>
        <dbReference type="ChEBI" id="CHEBI:49883"/>
        <label>1</label>
    </ligand>
</feature>
<feature type="binding site" evidence="1">
    <location>
        <position position="74"/>
    </location>
    <ligand>
        <name>[4Fe-4S] cluster</name>
        <dbReference type="ChEBI" id="CHEBI:49883"/>
        <label>1</label>
    </ligand>
</feature>
<feature type="binding site" evidence="1">
    <location>
        <position position="117"/>
    </location>
    <ligand>
        <name>[4Fe-4S] cluster</name>
        <dbReference type="ChEBI" id="CHEBI:49883"/>
        <label>2</label>
    </ligand>
</feature>
<feature type="binding site" evidence="1">
    <location>
        <position position="120"/>
    </location>
    <ligand>
        <name>[4Fe-4S] cluster</name>
        <dbReference type="ChEBI" id="CHEBI:49883"/>
        <label>2</label>
    </ligand>
</feature>
<feature type="binding site" evidence="1">
    <location>
        <position position="123"/>
    </location>
    <ligand>
        <name>[4Fe-4S] cluster</name>
        <dbReference type="ChEBI" id="CHEBI:49883"/>
        <label>2</label>
    </ligand>
</feature>
<feature type="binding site" evidence="1">
    <location>
        <position position="127"/>
    </location>
    <ligand>
        <name>[4Fe-4S] cluster</name>
        <dbReference type="ChEBI" id="CHEBI:49883"/>
        <label>3</label>
    </ligand>
</feature>
<feature type="binding site" evidence="1">
    <location>
        <position position="147"/>
    </location>
    <ligand>
        <name>[4Fe-4S] cluster</name>
        <dbReference type="ChEBI" id="CHEBI:49883"/>
        <label>3</label>
    </ligand>
</feature>
<feature type="binding site" evidence="1">
    <location>
        <position position="150"/>
    </location>
    <ligand>
        <name>[4Fe-4S] cluster</name>
        <dbReference type="ChEBI" id="CHEBI:49883"/>
        <label>3</label>
    </ligand>
</feature>
<feature type="binding site" evidence="1">
    <location>
        <position position="153"/>
    </location>
    <ligand>
        <name>[4Fe-4S] cluster</name>
        <dbReference type="ChEBI" id="CHEBI:49883"/>
        <label>3</label>
    </ligand>
</feature>
<feature type="binding site" evidence="1">
    <location>
        <position position="157"/>
    </location>
    <ligand>
        <name>[4Fe-4S] cluster</name>
        <dbReference type="ChEBI" id="CHEBI:49883"/>
        <label>2</label>
    </ligand>
</feature>
<accession>C6DH16</accession>
<dbReference type="EC" id="7.-.-.-" evidence="1"/>
<dbReference type="EMBL" id="CP001657">
    <property type="protein sequence ID" value="ACT13065.1"/>
    <property type="molecule type" value="Genomic_DNA"/>
</dbReference>
<dbReference type="STRING" id="561230.PC1_2024"/>
<dbReference type="KEGG" id="pct:PC1_2024"/>
<dbReference type="eggNOG" id="COG2878">
    <property type="taxonomic scope" value="Bacteria"/>
</dbReference>
<dbReference type="HOGENOM" id="CLU_063448_2_0_6"/>
<dbReference type="OrthoDB" id="9789936at2"/>
<dbReference type="Proteomes" id="UP000002736">
    <property type="component" value="Chromosome"/>
</dbReference>
<dbReference type="GO" id="GO:0005886">
    <property type="term" value="C:plasma membrane"/>
    <property type="evidence" value="ECO:0007669"/>
    <property type="project" value="UniProtKB-SubCell"/>
</dbReference>
<dbReference type="GO" id="GO:0051539">
    <property type="term" value="F:4 iron, 4 sulfur cluster binding"/>
    <property type="evidence" value="ECO:0007669"/>
    <property type="project" value="UniProtKB-UniRule"/>
</dbReference>
<dbReference type="GO" id="GO:0009055">
    <property type="term" value="F:electron transfer activity"/>
    <property type="evidence" value="ECO:0007669"/>
    <property type="project" value="InterPro"/>
</dbReference>
<dbReference type="GO" id="GO:0046872">
    <property type="term" value="F:metal ion binding"/>
    <property type="evidence" value="ECO:0007669"/>
    <property type="project" value="UniProtKB-KW"/>
</dbReference>
<dbReference type="GO" id="GO:0022900">
    <property type="term" value="P:electron transport chain"/>
    <property type="evidence" value="ECO:0007669"/>
    <property type="project" value="UniProtKB-UniRule"/>
</dbReference>
<dbReference type="FunFam" id="1.10.15.40:FF:000001">
    <property type="entry name" value="Ion-translocating oxidoreductase complex subunit B"/>
    <property type="match status" value="1"/>
</dbReference>
<dbReference type="Gene3D" id="3.30.70.20">
    <property type="match status" value="1"/>
</dbReference>
<dbReference type="Gene3D" id="1.10.15.40">
    <property type="entry name" value="Electron transport complex subunit B, putative Fe-S cluster"/>
    <property type="match status" value="1"/>
</dbReference>
<dbReference type="HAMAP" id="MF_00463">
    <property type="entry name" value="RsxB_RnfB"/>
    <property type="match status" value="1"/>
</dbReference>
<dbReference type="InterPro" id="IPR007202">
    <property type="entry name" value="4Fe-4S_dom"/>
</dbReference>
<dbReference type="InterPro" id="IPR017896">
    <property type="entry name" value="4Fe4S_Fe-S-bd"/>
</dbReference>
<dbReference type="InterPro" id="IPR017900">
    <property type="entry name" value="4Fe4S_Fe_S_CS"/>
</dbReference>
<dbReference type="InterPro" id="IPR010207">
    <property type="entry name" value="Elect_transpt_cplx_RnfB/RsxB"/>
</dbReference>
<dbReference type="InterPro" id="IPR016463">
    <property type="entry name" value="RnfB/RsxB_Proteobac"/>
</dbReference>
<dbReference type="InterPro" id="IPR050294">
    <property type="entry name" value="RnfB_subfamily"/>
</dbReference>
<dbReference type="NCBIfam" id="NF003475">
    <property type="entry name" value="PRK05113.1"/>
    <property type="match status" value="1"/>
</dbReference>
<dbReference type="NCBIfam" id="TIGR01944">
    <property type="entry name" value="rnfB"/>
    <property type="match status" value="1"/>
</dbReference>
<dbReference type="PANTHER" id="PTHR42859:SF3">
    <property type="entry name" value="ION-TRANSLOCATING OXIDOREDUCTASE COMPLEX SUBUNIT B"/>
    <property type="match status" value="1"/>
</dbReference>
<dbReference type="PANTHER" id="PTHR42859">
    <property type="entry name" value="OXIDOREDUCTASE"/>
    <property type="match status" value="1"/>
</dbReference>
<dbReference type="Pfam" id="PF14697">
    <property type="entry name" value="Fer4_21"/>
    <property type="match status" value="1"/>
</dbReference>
<dbReference type="Pfam" id="PF04060">
    <property type="entry name" value="FeS"/>
    <property type="match status" value="1"/>
</dbReference>
<dbReference type="PIRSF" id="PIRSF005784">
    <property type="entry name" value="Elect_transpt_RnfB"/>
    <property type="match status" value="1"/>
</dbReference>
<dbReference type="SUPFAM" id="SSF54862">
    <property type="entry name" value="4Fe-4S ferredoxins"/>
    <property type="match status" value="1"/>
</dbReference>
<dbReference type="PROSITE" id="PS51656">
    <property type="entry name" value="4FE4S"/>
    <property type="match status" value="1"/>
</dbReference>
<dbReference type="PROSITE" id="PS00198">
    <property type="entry name" value="4FE4S_FER_1"/>
    <property type="match status" value="2"/>
</dbReference>
<dbReference type="PROSITE" id="PS51379">
    <property type="entry name" value="4FE4S_FER_2"/>
    <property type="match status" value="2"/>
</dbReference>
<evidence type="ECO:0000255" key="1">
    <source>
        <dbReference type="HAMAP-Rule" id="MF_00463"/>
    </source>
</evidence>
<keyword id="KW-0004">4Fe-4S</keyword>
<keyword id="KW-0997">Cell inner membrane</keyword>
<keyword id="KW-1003">Cell membrane</keyword>
<keyword id="KW-0249">Electron transport</keyword>
<keyword id="KW-0408">Iron</keyword>
<keyword id="KW-0411">Iron-sulfur</keyword>
<keyword id="KW-0472">Membrane</keyword>
<keyword id="KW-0479">Metal-binding</keyword>
<keyword id="KW-0677">Repeat</keyword>
<keyword id="KW-1278">Translocase</keyword>
<keyword id="KW-0813">Transport</keyword>
<name>RNFB_PECCP</name>
<gene>
    <name evidence="1" type="primary">rnfB</name>
    <name type="ordered locus">PC1_2024</name>
</gene>
<proteinExistence type="inferred from homology"/>
<comment type="function">
    <text evidence="1">Part of a membrane-bound complex that couples electron transfer with translocation of ions across the membrane.</text>
</comment>
<comment type="cofactor">
    <cofactor evidence="1">
        <name>[4Fe-4S] cluster</name>
        <dbReference type="ChEBI" id="CHEBI:49883"/>
    </cofactor>
    <text evidence="1">Binds 3 [4Fe-4S] clusters.</text>
</comment>
<comment type="subunit">
    <text evidence="1">The complex is composed of six subunits: RnfA, RnfB, RnfC, RnfD, RnfE and RnfG.</text>
</comment>
<comment type="subcellular location">
    <subcellularLocation>
        <location evidence="1">Cell inner membrane</location>
    </subcellularLocation>
</comment>
<comment type="similarity">
    <text evidence="1">Belongs to the 4Fe4S bacterial-type ferredoxin family. RnfB subfamily.</text>
</comment>
<sequence>MSTIWIAIAALSALALAFGLVLGYASRRFEVENDPIVEEVEAMLPQSQCGQCGYPGCRPYAEAVALNGENINKCGPGGEAMMLKLAEKLNVDPQPLEGDADVQAPARQVAWIDESNCIGCTKCIQACPVDAIIGSTKAVHTVVSDLCTGCDLCVAPCPTDCIELRPIAPTPANWKWDLDTIPVRVIQVERHA</sequence>